<comment type="subunit">
    <text evidence="1">Component of the U11/U12 snRNPs that are part of the U12-type spliceosome.</text>
</comment>
<comment type="subcellular location">
    <subcellularLocation>
        <location evidence="1">Nucleus</location>
    </subcellularLocation>
</comment>
<comment type="sequence caution" evidence="4">
    <conflict type="erroneous gene model prediction">
        <sequence resource="EMBL-CDS" id="AAC62886"/>
    </conflict>
</comment>
<name>U1159_ARATH</name>
<proteinExistence type="evidence at transcript level"/>
<feature type="chain" id="PRO_0000429828" description="U11/U12 small nuclear ribonucleoprotein 59 kDa protein">
    <location>
        <begin position="1"/>
        <end position="382"/>
    </location>
</feature>
<feature type="region of interest" description="Disordered" evidence="3">
    <location>
        <begin position="274"/>
        <end position="297"/>
    </location>
</feature>
<feature type="coiled-coil region" evidence="2">
    <location>
        <begin position="31"/>
        <end position="63"/>
    </location>
</feature>
<feature type="compositionally biased region" description="Low complexity" evidence="3">
    <location>
        <begin position="277"/>
        <end position="287"/>
    </location>
</feature>
<keyword id="KW-0175">Coiled coil</keyword>
<keyword id="KW-0507">mRNA processing</keyword>
<keyword id="KW-0508">mRNA splicing</keyword>
<keyword id="KW-0539">Nucleus</keyword>
<keyword id="KW-1185">Reference proteome</keyword>
<keyword id="KW-0687">Ribonucleoprotein</keyword>
<keyword id="KW-0747">Spliceosome</keyword>
<sequence length="382" mass="44031">MNPANFQPPNPPFHWAPMLPPDPPRCGMFWNTKNITDQLKQLQDTLNLAKSMEKELEALKMIKDAKGSVENAVQDSGVEYLEARKMDLGQQEMLSVDAANSLMSTLRAQLEPFRFVVDENSPWEEKSAAVRLTCKMKKSIRNKLWKKRKRRCAAEMRAKEPERFEQADREADEWREKEMAKDMANRKVDEMKAIEKIKAKRERKRLEPELELALIVEEMQELRSLRIEKLKKQGHFLPEEDDKFFESVRAAVEQEENQAQSLINTETEEHVIASEENTTLTTSNKTNNDTDKDSNTNAASCERTMKAPDNGCDNISNLPVEVYHYYYGSNIDMGRLIEIRREWDAYLSAGGSRIPGHWVQPSPPANEIWASCLVNTPKRDLS</sequence>
<protein>
    <recommendedName>
        <fullName>U11/U12 small nuclear ribonucleoprotein 59 kDa protein</fullName>
        <shortName>U11/U12 snRNP 59 kDa protein</shortName>
        <shortName>U11/U12-59K</shortName>
    </recommendedName>
</protein>
<organism>
    <name type="scientific">Arabidopsis thaliana</name>
    <name type="common">Mouse-ear cress</name>
    <dbReference type="NCBI Taxonomy" id="3702"/>
    <lineage>
        <taxon>Eukaryota</taxon>
        <taxon>Viridiplantae</taxon>
        <taxon>Streptophyta</taxon>
        <taxon>Embryophyta</taxon>
        <taxon>Tracheophyta</taxon>
        <taxon>Spermatophyta</taxon>
        <taxon>Magnoliopsida</taxon>
        <taxon>eudicotyledons</taxon>
        <taxon>Gunneridae</taxon>
        <taxon>Pentapetalae</taxon>
        <taxon>rosids</taxon>
        <taxon>malvids</taxon>
        <taxon>Brassicales</taxon>
        <taxon>Brassicaceae</taxon>
        <taxon>Camelineae</taxon>
        <taxon>Arabidopsis</taxon>
    </lineage>
</organism>
<gene>
    <name type="primary">SNRNP59</name>
    <name type="ordered locus">At2g46200</name>
    <name type="ORF">T3F17.15</name>
</gene>
<evidence type="ECO:0000250" key="1"/>
<evidence type="ECO:0000255" key="2"/>
<evidence type="ECO:0000256" key="3">
    <source>
        <dbReference type="SAM" id="MobiDB-lite"/>
    </source>
</evidence>
<evidence type="ECO:0000305" key="4"/>
<accession>Q8VYD3</accession>
<accession>O82349</accession>
<reference key="1">
    <citation type="journal article" date="1999" name="Nature">
        <title>Sequence and analysis of chromosome 2 of the plant Arabidopsis thaliana.</title>
        <authorList>
            <person name="Lin X."/>
            <person name="Kaul S."/>
            <person name="Rounsley S.D."/>
            <person name="Shea T.P."/>
            <person name="Benito M.-I."/>
            <person name="Town C.D."/>
            <person name="Fujii C.Y."/>
            <person name="Mason T.M."/>
            <person name="Bowman C.L."/>
            <person name="Barnstead M.E."/>
            <person name="Feldblyum T.V."/>
            <person name="Buell C.R."/>
            <person name="Ketchum K.A."/>
            <person name="Lee J.J."/>
            <person name="Ronning C.M."/>
            <person name="Koo H.L."/>
            <person name="Moffat K.S."/>
            <person name="Cronin L.A."/>
            <person name="Shen M."/>
            <person name="Pai G."/>
            <person name="Van Aken S."/>
            <person name="Umayam L."/>
            <person name="Tallon L.J."/>
            <person name="Gill J.E."/>
            <person name="Adams M.D."/>
            <person name="Carrera A.J."/>
            <person name="Creasy T.H."/>
            <person name="Goodman H.M."/>
            <person name="Somerville C.R."/>
            <person name="Copenhaver G.P."/>
            <person name="Preuss D."/>
            <person name="Nierman W.C."/>
            <person name="White O."/>
            <person name="Eisen J.A."/>
            <person name="Salzberg S.L."/>
            <person name="Fraser C.M."/>
            <person name="Venter J.C."/>
        </authorList>
    </citation>
    <scope>NUCLEOTIDE SEQUENCE [LARGE SCALE GENOMIC DNA]</scope>
    <source>
        <strain>cv. Columbia</strain>
    </source>
</reference>
<reference key="2">
    <citation type="journal article" date="2017" name="Plant J.">
        <title>Araport11: a complete reannotation of the Arabidopsis thaliana reference genome.</title>
        <authorList>
            <person name="Cheng C.Y."/>
            <person name="Krishnakumar V."/>
            <person name="Chan A.P."/>
            <person name="Thibaud-Nissen F."/>
            <person name="Schobel S."/>
            <person name="Town C.D."/>
        </authorList>
    </citation>
    <scope>GENOME REANNOTATION</scope>
    <source>
        <strain>cv. Columbia</strain>
    </source>
</reference>
<reference key="3">
    <citation type="journal article" date="2003" name="Science">
        <title>Empirical analysis of transcriptional activity in the Arabidopsis genome.</title>
        <authorList>
            <person name="Yamada K."/>
            <person name="Lim J."/>
            <person name="Dale J.M."/>
            <person name="Chen H."/>
            <person name="Shinn P."/>
            <person name="Palm C.J."/>
            <person name="Southwick A.M."/>
            <person name="Wu H.C."/>
            <person name="Kim C.J."/>
            <person name="Nguyen M."/>
            <person name="Pham P.K."/>
            <person name="Cheuk R.F."/>
            <person name="Karlin-Newmann G."/>
            <person name="Liu S.X."/>
            <person name="Lam B."/>
            <person name="Sakano H."/>
            <person name="Wu T."/>
            <person name="Yu G."/>
            <person name="Miranda M."/>
            <person name="Quach H.L."/>
            <person name="Tripp M."/>
            <person name="Chang C.H."/>
            <person name="Lee J.M."/>
            <person name="Toriumi M.J."/>
            <person name="Chan M.M."/>
            <person name="Tang C.C."/>
            <person name="Onodera C.S."/>
            <person name="Deng J.M."/>
            <person name="Akiyama K."/>
            <person name="Ansari Y."/>
            <person name="Arakawa T."/>
            <person name="Banh J."/>
            <person name="Banno F."/>
            <person name="Bowser L."/>
            <person name="Brooks S.Y."/>
            <person name="Carninci P."/>
            <person name="Chao Q."/>
            <person name="Choy N."/>
            <person name="Enju A."/>
            <person name="Goldsmith A.D."/>
            <person name="Gurjal M."/>
            <person name="Hansen N.F."/>
            <person name="Hayashizaki Y."/>
            <person name="Johnson-Hopson C."/>
            <person name="Hsuan V.W."/>
            <person name="Iida K."/>
            <person name="Karnes M."/>
            <person name="Khan S."/>
            <person name="Koesema E."/>
            <person name="Ishida J."/>
            <person name="Jiang P.X."/>
            <person name="Jones T."/>
            <person name="Kawai J."/>
            <person name="Kamiya A."/>
            <person name="Meyers C."/>
            <person name="Nakajima M."/>
            <person name="Narusaka M."/>
            <person name="Seki M."/>
            <person name="Sakurai T."/>
            <person name="Satou M."/>
            <person name="Tamse R."/>
            <person name="Vaysberg M."/>
            <person name="Wallender E.K."/>
            <person name="Wong C."/>
            <person name="Yamamura Y."/>
            <person name="Yuan S."/>
            <person name="Shinozaki K."/>
            <person name="Davis R.W."/>
            <person name="Theologis A."/>
            <person name="Ecker J.R."/>
        </authorList>
    </citation>
    <scope>NUCLEOTIDE SEQUENCE [LARGE SCALE MRNA]</scope>
    <source>
        <strain>cv. Columbia</strain>
    </source>
</reference>
<reference key="4">
    <citation type="journal article" date="2005" name="RNA">
        <title>Evolutionary conservation of minor U12-type spliceosome between plants and humans.</title>
        <authorList>
            <person name="Lorkovic Z.J."/>
            <person name="Lehner R."/>
            <person name="Forstner C."/>
            <person name="Barta A."/>
        </authorList>
    </citation>
    <scope>IDENTIFICATION</scope>
</reference>
<dbReference type="EMBL" id="AC005397">
    <property type="protein sequence ID" value="AAC62886.1"/>
    <property type="status" value="ALT_SEQ"/>
    <property type="molecule type" value="Genomic_DNA"/>
</dbReference>
<dbReference type="EMBL" id="CP002685">
    <property type="protein sequence ID" value="AEC10655.1"/>
    <property type="molecule type" value="Genomic_DNA"/>
</dbReference>
<dbReference type="EMBL" id="CP002685">
    <property type="protein sequence ID" value="AEC10656.1"/>
    <property type="molecule type" value="Genomic_DNA"/>
</dbReference>
<dbReference type="EMBL" id="AY072162">
    <property type="protein sequence ID" value="AAL59984.1"/>
    <property type="molecule type" value="mRNA"/>
</dbReference>
<dbReference type="EMBL" id="AY096418">
    <property type="protein sequence ID" value="AAM20058.1"/>
    <property type="molecule type" value="mRNA"/>
</dbReference>
<dbReference type="PIR" id="H84899">
    <property type="entry name" value="H84899"/>
</dbReference>
<dbReference type="RefSeq" id="NP_001324669.1">
    <property type="nucleotide sequence ID" value="NM_001337179.1"/>
</dbReference>
<dbReference type="RefSeq" id="NP_850448.1">
    <property type="nucleotide sequence ID" value="NM_180117.2"/>
</dbReference>
<dbReference type="RefSeq" id="NP_973696.1">
    <property type="nucleotide sequence ID" value="NM_201967.2"/>
</dbReference>
<dbReference type="SMR" id="Q8VYD3"/>
<dbReference type="FunCoup" id="Q8VYD3">
    <property type="interactions" value="246"/>
</dbReference>
<dbReference type="STRING" id="3702.Q8VYD3"/>
<dbReference type="PaxDb" id="3702-AT2G46200.2"/>
<dbReference type="ProteomicsDB" id="234640"/>
<dbReference type="EnsemblPlants" id="AT2G46200.1">
    <property type="protein sequence ID" value="AT2G46200.1"/>
    <property type="gene ID" value="AT2G46200"/>
</dbReference>
<dbReference type="EnsemblPlants" id="AT2G46200.2">
    <property type="protein sequence ID" value="AT2G46200.2"/>
    <property type="gene ID" value="AT2G46200"/>
</dbReference>
<dbReference type="GeneID" id="819227"/>
<dbReference type="Gramene" id="AT2G46200.1">
    <property type="protein sequence ID" value="AT2G46200.1"/>
    <property type="gene ID" value="AT2G46200"/>
</dbReference>
<dbReference type="Gramene" id="AT2G46200.2">
    <property type="protein sequence ID" value="AT2G46200.2"/>
    <property type="gene ID" value="AT2G46200"/>
</dbReference>
<dbReference type="KEGG" id="ath:AT2G46200"/>
<dbReference type="Araport" id="AT2G46200"/>
<dbReference type="TAIR" id="AT2G46200"/>
<dbReference type="eggNOG" id="ENOG502QVX1">
    <property type="taxonomic scope" value="Eukaryota"/>
</dbReference>
<dbReference type="HOGENOM" id="CLU_038993_1_0_1"/>
<dbReference type="InParanoid" id="Q8VYD3"/>
<dbReference type="OMA" id="TSFWQRD"/>
<dbReference type="OrthoDB" id="2289628at2759"/>
<dbReference type="PhylomeDB" id="Q8VYD3"/>
<dbReference type="PRO" id="PR:Q8VYD3"/>
<dbReference type="Proteomes" id="UP000006548">
    <property type="component" value="Chromosome 2"/>
</dbReference>
<dbReference type="ExpressionAtlas" id="Q8VYD3">
    <property type="expression patterns" value="baseline and differential"/>
</dbReference>
<dbReference type="GO" id="GO:0005681">
    <property type="term" value="C:spliceosomal complex"/>
    <property type="evidence" value="ECO:0007669"/>
    <property type="project" value="UniProtKB-KW"/>
</dbReference>
<dbReference type="GO" id="GO:0006397">
    <property type="term" value="P:mRNA processing"/>
    <property type="evidence" value="ECO:0007669"/>
    <property type="project" value="UniProtKB-KW"/>
</dbReference>
<dbReference type="GO" id="GO:0008380">
    <property type="term" value="P:RNA splicing"/>
    <property type="evidence" value="ECO:0007669"/>
    <property type="project" value="UniProtKB-KW"/>
</dbReference>
<dbReference type="InterPro" id="IPR052831">
    <property type="entry name" value="Apoptosis_promoter"/>
</dbReference>
<dbReference type="InterPro" id="IPR031974">
    <property type="entry name" value="PDCD7"/>
</dbReference>
<dbReference type="PANTHER" id="PTHR48190">
    <property type="entry name" value="PROGRAMMED CELL DEATH PROTEIN 7"/>
    <property type="match status" value="1"/>
</dbReference>
<dbReference type="PANTHER" id="PTHR48190:SF2">
    <property type="entry name" value="PROGRAMMED CELL DEATH PROTEIN 7"/>
    <property type="match status" value="1"/>
</dbReference>
<dbReference type="Pfam" id="PF16021">
    <property type="entry name" value="PDCD7"/>
    <property type="match status" value="1"/>
</dbReference>